<gene>
    <name evidence="7" type="primary">pakF</name>
    <name type="ORF">DDB_G0274409</name>
</gene>
<accession>Q869T7</accession>
<accession>Q554V7</accession>
<protein>
    <recommendedName>
        <fullName evidence="2">Serine/threonine-protein kinase pakF</fullName>
        <ecNumber>2.7.11.1</ecNumber>
    </recommendedName>
</protein>
<dbReference type="EC" id="2.7.11.1"/>
<dbReference type="EMBL" id="AAFI02000012">
    <property type="protein sequence ID" value="EAL70097.1"/>
    <property type="molecule type" value="Genomic_DNA"/>
</dbReference>
<dbReference type="RefSeq" id="XP_644216.1">
    <property type="nucleotide sequence ID" value="XM_639124.1"/>
</dbReference>
<dbReference type="SMR" id="Q869T7"/>
<dbReference type="FunCoup" id="Q869T7">
    <property type="interactions" value="97"/>
</dbReference>
<dbReference type="STRING" id="44689.Q869T7"/>
<dbReference type="GlyGen" id="Q869T7">
    <property type="glycosylation" value="1 site"/>
</dbReference>
<dbReference type="PaxDb" id="44689-DDB0229410"/>
<dbReference type="EnsemblProtists" id="EAL70097">
    <property type="protein sequence ID" value="EAL70097"/>
    <property type="gene ID" value="DDB_G0274409"/>
</dbReference>
<dbReference type="GeneID" id="8619645"/>
<dbReference type="KEGG" id="ddi:DDB_G0274409"/>
<dbReference type="dictyBase" id="DDB_G0274409">
    <property type="gene designation" value="pakF"/>
</dbReference>
<dbReference type="VEuPathDB" id="AmoebaDB:DDB_G0274409"/>
<dbReference type="eggNOG" id="KOG0574">
    <property type="taxonomic scope" value="Eukaryota"/>
</dbReference>
<dbReference type="HOGENOM" id="CLU_273573_0_0_1"/>
<dbReference type="InParanoid" id="Q869T7"/>
<dbReference type="OMA" id="DDYQERH"/>
<dbReference type="Reactome" id="R-DDI-75153">
    <property type="pathway name" value="Apoptotic execution phase"/>
</dbReference>
<dbReference type="PRO" id="PR:Q869T7"/>
<dbReference type="Proteomes" id="UP000002195">
    <property type="component" value="Chromosome 2"/>
</dbReference>
<dbReference type="GO" id="GO:0005737">
    <property type="term" value="C:cytoplasm"/>
    <property type="evidence" value="ECO:0000318"/>
    <property type="project" value="GO_Central"/>
</dbReference>
<dbReference type="GO" id="GO:0005524">
    <property type="term" value="F:ATP binding"/>
    <property type="evidence" value="ECO:0000250"/>
    <property type="project" value="dictyBase"/>
</dbReference>
<dbReference type="GO" id="GO:0046872">
    <property type="term" value="F:metal ion binding"/>
    <property type="evidence" value="ECO:0007669"/>
    <property type="project" value="UniProtKB-KW"/>
</dbReference>
<dbReference type="GO" id="GO:0106310">
    <property type="term" value="F:protein serine kinase activity"/>
    <property type="evidence" value="ECO:0007669"/>
    <property type="project" value="RHEA"/>
</dbReference>
<dbReference type="GO" id="GO:0004674">
    <property type="term" value="F:protein serine/threonine kinase activity"/>
    <property type="evidence" value="ECO:0000250"/>
    <property type="project" value="dictyBase"/>
</dbReference>
<dbReference type="GO" id="GO:0035556">
    <property type="term" value="P:intracellular signal transduction"/>
    <property type="evidence" value="ECO:0000318"/>
    <property type="project" value="GO_Central"/>
</dbReference>
<dbReference type="GO" id="GO:0006468">
    <property type="term" value="P:protein phosphorylation"/>
    <property type="evidence" value="ECO:0000250"/>
    <property type="project" value="dictyBase"/>
</dbReference>
<dbReference type="CDD" id="cd06612">
    <property type="entry name" value="STKc_MST1_2"/>
    <property type="match status" value="1"/>
</dbReference>
<dbReference type="FunFam" id="1.10.510.10:FF:000499">
    <property type="entry name" value="Serine/threonine-protein kinase KIC1"/>
    <property type="match status" value="1"/>
</dbReference>
<dbReference type="Gene3D" id="1.10.510.10">
    <property type="entry name" value="Transferase(Phosphotransferase) domain 1"/>
    <property type="match status" value="1"/>
</dbReference>
<dbReference type="InterPro" id="IPR011009">
    <property type="entry name" value="Kinase-like_dom_sf"/>
</dbReference>
<dbReference type="InterPro" id="IPR000719">
    <property type="entry name" value="Prot_kinase_dom"/>
</dbReference>
<dbReference type="InterPro" id="IPR017441">
    <property type="entry name" value="Protein_kinase_ATP_BS"/>
</dbReference>
<dbReference type="InterPro" id="IPR008271">
    <property type="entry name" value="Ser/Thr_kinase_AS"/>
</dbReference>
<dbReference type="InterPro" id="IPR050629">
    <property type="entry name" value="STE20/SPS1-PAK"/>
</dbReference>
<dbReference type="PANTHER" id="PTHR48012:SF28">
    <property type="entry name" value="SERINE_THREONINE-PROTEIN KINASE PAKE-RELATED"/>
    <property type="match status" value="1"/>
</dbReference>
<dbReference type="PANTHER" id="PTHR48012">
    <property type="entry name" value="STERILE20-LIKE KINASE, ISOFORM B-RELATED"/>
    <property type="match status" value="1"/>
</dbReference>
<dbReference type="Pfam" id="PF00069">
    <property type="entry name" value="Pkinase"/>
    <property type="match status" value="1"/>
</dbReference>
<dbReference type="SMART" id="SM00220">
    <property type="entry name" value="S_TKc"/>
    <property type="match status" value="1"/>
</dbReference>
<dbReference type="SUPFAM" id="SSF56112">
    <property type="entry name" value="Protein kinase-like (PK-like)"/>
    <property type="match status" value="1"/>
</dbReference>
<dbReference type="PROSITE" id="PS00107">
    <property type="entry name" value="PROTEIN_KINASE_ATP"/>
    <property type="match status" value="1"/>
</dbReference>
<dbReference type="PROSITE" id="PS50011">
    <property type="entry name" value="PROTEIN_KINASE_DOM"/>
    <property type="match status" value="1"/>
</dbReference>
<dbReference type="PROSITE" id="PS00108">
    <property type="entry name" value="PROTEIN_KINASE_ST"/>
    <property type="match status" value="1"/>
</dbReference>
<evidence type="ECO:0000250" key="1">
    <source>
        <dbReference type="UniProtKB" id="P28523"/>
    </source>
</evidence>
<evidence type="ECO:0000250" key="2">
    <source>
        <dbReference type="UniProtKB" id="Q869N2"/>
    </source>
</evidence>
<evidence type="ECO:0000255" key="3"/>
<evidence type="ECO:0000255" key="4">
    <source>
        <dbReference type="PROSITE-ProRule" id="PRU00159"/>
    </source>
</evidence>
<evidence type="ECO:0000255" key="5">
    <source>
        <dbReference type="PROSITE-ProRule" id="PRU10027"/>
    </source>
</evidence>
<evidence type="ECO:0000256" key="6">
    <source>
        <dbReference type="SAM" id="MobiDB-lite"/>
    </source>
</evidence>
<evidence type="ECO:0000312" key="7">
    <source>
        <dbReference type="EMBL" id="EAL70097.1"/>
    </source>
</evidence>
<sequence>MSNLKLSNNNNGNQKESSSFFQKVMKSPSTQNLLNSFSSNNSNNNLSNSGSNEVKDTTTNSPSQLPPNYTPPPPPHQIRNSSSIEGGEFSLLNNENSDNNNNNNNNNNNNNNNNNNNNNNNNNNNEQLARTESSVSIISSSSSGSNSGQPNLQRHSSNISTDDSNTTTETYSMSPNQTLNSNIDSSEQQHQDLSSSVNNNNNNNNNNNNNNNNNNNNNNNNNNNNNTHESRKLTRKIAQFISSPKLLQSSISQLPSTPTQQNVEIQTTNGGSSETSPNGLISPRPSNDQPLKEKKKKKFLKTPEIFKHHHHHKESSLSSSTTTPSTTSSLTSSPSSSSLAISSPNTTAATTTNKKSHKKTKSTFDINTEISVPYNVIHKMHVDFDLKWTGHNDFILDEKLGDGAYGSVYKGTHKDLGFTLAIKVIEMKESESVSLQNEINILKNCKSPNIVSYFGSLQTESHIWILLDFCALGSIRDIIESTEKTLNEAQISFVVKNTLKGLIYLHSQNIIHRDVKAANVLLSEGCDVKIADFGVSEKLNGALDQSKEMIGTPLWMAPEVILKKNYDYKADIWSLGITIIEMADGLPPHIDLPPMRAMKMVPNWPPPTFAEPKKWSPLLNDFLARCLVKDPEKRASPIDLLCHPFLKKDRGPDVLSDLVNQLFKIKKKKIDDLKKQQKHQTSQSSSSSSPQSPNATVNGGDIGSDGLSTSIISPIPSSPSDELDNCNNSLKLATSSKGMLSFKGNYTTCRDFQEEEEDSKHLNNNQDEQDDEQDDEDDDDENEDDEDVDPFSTTIFHGKKKGSGNGNGGVTSDQDDEEEDEEEDDEEEEEEEEDDDEINEDEEISATGTMVVRKKKNKSTKKSNKKKNKKNNLSTIGKSGSGNNLLHVAPNKPLPITPPFSISMTNEFKQLETKLFTYIDSSNQKIVNDIKNEIKQLESSIINKININLQQQLSPILLALEEIKQNQHTTSQPKQMQSKLSATNLNEKKLSSSPPSSNSPLTNSVNSSLTTTTTTTTSPVLSRQSSFRSSGSISSSNSSFRPNSAIMSAVNNSSTTTTTNSNSSSSNGGGSGVDISPTMTGRASPSIMKRFTTSSSSSPLSSSSDGFAFNSNSNSSSSDLKRHVITPEELNNSNLVKNKVKMFEDDNSSGSGSNSPSLSTNSSSTNSNNSVTNIKK</sequence>
<reference key="1">
    <citation type="journal article" date="2002" name="Nature">
        <title>Sequence and analysis of chromosome 2 of Dictyostelium discoideum.</title>
        <authorList>
            <person name="Gloeckner G."/>
            <person name="Eichinger L."/>
            <person name="Szafranski K."/>
            <person name="Pachebat J.A."/>
            <person name="Bankier A.T."/>
            <person name="Dear P.H."/>
            <person name="Lehmann R."/>
            <person name="Baumgart C."/>
            <person name="Parra G."/>
            <person name="Abril J.F."/>
            <person name="Guigo R."/>
            <person name="Kumpf K."/>
            <person name="Tunggal B."/>
            <person name="Cox E.C."/>
            <person name="Quail M.A."/>
            <person name="Platzer M."/>
            <person name="Rosenthal A."/>
            <person name="Noegel A.A."/>
        </authorList>
    </citation>
    <scope>NUCLEOTIDE SEQUENCE [LARGE SCALE GENOMIC DNA]</scope>
    <source>
        <strain>AX4</strain>
    </source>
</reference>
<reference evidence="7" key="2">
    <citation type="journal article" date="2005" name="Nature">
        <title>The genome of the social amoeba Dictyostelium discoideum.</title>
        <authorList>
            <person name="Eichinger L."/>
            <person name="Pachebat J.A."/>
            <person name="Gloeckner G."/>
            <person name="Rajandream M.A."/>
            <person name="Sucgang R."/>
            <person name="Berriman M."/>
            <person name="Song J."/>
            <person name="Olsen R."/>
            <person name="Szafranski K."/>
            <person name="Xu Q."/>
            <person name="Tunggal B."/>
            <person name="Kummerfeld S."/>
            <person name="Madera M."/>
            <person name="Konfortov B.A."/>
            <person name="Rivero F."/>
            <person name="Bankier A.T."/>
            <person name="Lehmann R."/>
            <person name="Hamlin N."/>
            <person name="Davies R."/>
            <person name="Gaudet P."/>
            <person name="Fey P."/>
            <person name="Pilcher K."/>
            <person name="Chen G."/>
            <person name="Saunders D."/>
            <person name="Sodergren E.J."/>
            <person name="Davis P."/>
            <person name="Kerhornou A."/>
            <person name="Nie X."/>
            <person name="Hall N."/>
            <person name="Anjard C."/>
            <person name="Hemphill L."/>
            <person name="Bason N."/>
            <person name="Farbrother P."/>
            <person name="Desany B."/>
            <person name="Just E."/>
            <person name="Morio T."/>
            <person name="Rost R."/>
            <person name="Churcher C.M."/>
            <person name="Cooper J."/>
            <person name="Haydock S."/>
            <person name="van Driessche N."/>
            <person name="Cronin A."/>
            <person name="Goodhead I."/>
            <person name="Muzny D.M."/>
            <person name="Mourier T."/>
            <person name="Pain A."/>
            <person name="Lu M."/>
            <person name="Harper D."/>
            <person name="Lindsay R."/>
            <person name="Hauser H."/>
            <person name="James K.D."/>
            <person name="Quiles M."/>
            <person name="Madan Babu M."/>
            <person name="Saito T."/>
            <person name="Buchrieser C."/>
            <person name="Wardroper A."/>
            <person name="Felder M."/>
            <person name="Thangavelu M."/>
            <person name="Johnson D."/>
            <person name="Knights A."/>
            <person name="Loulseged H."/>
            <person name="Mungall K.L."/>
            <person name="Oliver K."/>
            <person name="Price C."/>
            <person name="Quail M.A."/>
            <person name="Urushihara H."/>
            <person name="Hernandez J."/>
            <person name="Rabbinowitsch E."/>
            <person name="Steffen D."/>
            <person name="Sanders M."/>
            <person name="Ma J."/>
            <person name="Kohara Y."/>
            <person name="Sharp S."/>
            <person name="Simmonds M.N."/>
            <person name="Spiegler S."/>
            <person name="Tivey A."/>
            <person name="Sugano S."/>
            <person name="White B."/>
            <person name="Walker D."/>
            <person name="Woodward J.R."/>
            <person name="Winckler T."/>
            <person name="Tanaka Y."/>
            <person name="Shaulsky G."/>
            <person name="Schleicher M."/>
            <person name="Weinstock G.M."/>
            <person name="Rosenthal A."/>
            <person name="Cox E.C."/>
            <person name="Chisholm R.L."/>
            <person name="Gibbs R.A."/>
            <person name="Loomis W.F."/>
            <person name="Platzer M."/>
            <person name="Kay R.R."/>
            <person name="Williams J.G."/>
            <person name="Dear P.H."/>
            <person name="Noegel A.A."/>
            <person name="Barrell B.G."/>
            <person name="Kuspa A."/>
        </authorList>
    </citation>
    <scope>NUCLEOTIDE SEQUENCE [LARGE SCALE GENOMIC DNA]</scope>
    <source>
        <strain evidence="7">AX4</strain>
    </source>
</reference>
<proteinExistence type="inferred from homology"/>
<name>PAKF_DICDI</name>
<comment type="catalytic activity">
    <reaction evidence="2">
        <text>L-seryl-[protein] + ATP = O-phospho-L-seryl-[protein] + ADP + H(+)</text>
        <dbReference type="Rhea" id="RHEA:17989"/>
        <dbReference type="Rhea" id="RHEA-COMP:9863"/>
        <dbReference type="Rhea" id="RHEA-COMP:11604"/>
        <dbReference type="ChEBI" id="CHEBI:15378"/>
        <dbReference type="ChEBI" id="CHEBI:29999"/>
        <dbReference type="ChEBI" id="CHEBI:30616"/>
        <dbReference type="ChEBI" id="CHEBI:83421"/>
        <dbReference type="ChEBI" id="CHEBI:456216"/>
        <dbReference type="EC" id="2.7.11.1"/>
    </reaction>
</comment>
<comment type="catalytic activity">
    <reaction evidence="2">
        <text>L-threonyl-[protein] + ATP = O-phospho-L-threonyl-[protein] + ADP + H(+)</text>
        <dbReference type="Rhea" id="RHEA:46608"/>
        <dbReference type="Rhea" id="RHEA-COMP:11060"/>
        <dbReference type="Rhea" id="RHEA-COMP:11605"/>
        <dbReference type="ChEBI" id="CHEBI:15378"/>
        <dbReference type="ChEBI" id="CHEBI:30013"/>
        <dbReference type="ChEBI" id="CHEBI:30616"/>
        <dbReference type="ChEBI" id="CHEBI:61977"/>
        <dbReference type="ChEBI" id="CHEBI:456216"/>
        <dbReference type="EC" id="2.7.11.1"/>
    </reaction>
</comment>
<comment type="cofactor">
    <cofactor evidence="2">
        <name>Mg(2+)</name>
        <dbReference type="ChEBI" id="CHEBI:18420"/>
    </cofactor>
</comment>
<comment type="similarity">
    <text evidence="2">Belongs to the protein kinase superfamily. STE Ser/Thr protein kinase family. STE20 subfamily.</text>
</comment>
<keyword id="KW-0067">ATP-binding</keyword>
<keyword id="KW-0175">Coiled coil</keyword>
<keyword id="KW-0418">Kinase</keyword>
<keyword id="KW-0460">Magnesium</keyword>
<keyword id="KW-0479">Metal-binding</keyword>
<keyword id="KW-0547">Nucleotide-binding</keyword>
<keyword id="KW-1185">Reference proteome</keyword>
<keyword id="KW-0723">Serine/threonine-protein kinase</keyword>
<keyword id="KW-0808">Transferase</keyword>
<organism>
    <name type="scientific">Dictyostelium discoideum</name>
    <name type="common">Social amoeba</name>
    <dbReference type="NCBI Taxonomy" id="44689"/>
    <lineage>
        <taxon>Eukaryota</taxon>
        <taxon>Amoebozoa</taxon>
        <taxon>Evosea</taxon>
        <taxon>Eumycetozoa</taxon>
        <taxon>Dictyostelia</taxon>
        <taxon>Dictyosteliales</taxon>
        <taxon>Dictyosteliaceae</taxon>
        <taxon>Dictyostelium</taxon>
    </lineage>
</organism>
<feature type="chain" id="PRO_0000363942" description="Serine/threonine-protein kinase pakF">
    <location>
        <begin position="1"/>
        <end position="1176"/>
    </location>
</feature>
<feature type="domain" description="CRIB" evidence="3">
    <location>
        <begin position="370"/>
        <end position="383"/>
    </location>
</feature>
<feature type="domain" description="Protein kinase" evidence="4">
    <location>
        <begin position="394"/>
        <end position="646"/>
    </location>
</feature>
<feature type="region of interest" description="Disordered" evidence="6">
    <location>
        <begin position="1"/>
        <end position="231"/>
    </location>
</feature>
<feature type="region of interest" description="Disordered" evidence="6">
    <location>
        <begin position="254"/>
        <end position="361"/>
    </location>
</feature>
<feature type="region of interest" description="Disordered" evidence="6">
    <location>
        <begin position="670"/>
        <end position="723"/>
    </location>
</feature>
<feature type="region of interest" description="Disordered" evidence="6">
    <location>
        <begin position="753"/>
        <end position="885"/>
    </location>
</feature>
<feature type="region of interest" description="Disordered" evidence="6">
    <location>
        <begin position="968"/>
        <end position="1083"/>
    </location>
</feature>
<feature type="region of interest" description="Disordered" evidence="6">
    <location>
        <begin position="1112"/>
        <end position="1176"/>
    </location>
</feature>
<feature type="coiled-coil region" evidence="3">
    <location>
        <begin position="92"/>
        <end position="133"/>
    </location>
</feature>
<feature type="coiled-coil region" evidence="3">
    <location>
        <begin position="812"/>
        <end position="873"/>
    </location>
</feature>
<feature type="compositionally biased region" description="Low complexity" evidence="6">
    <location>
        <begin position="1"/>
        <end position="19"/>
    </location>
</feature>
<feature type="compositionally biased region" description="Low complexity" evidence="6">
    <location>
        <begin position="32"/>
        <end position="52"/>
    </location>
</feature>
<feature type="compositionally biased region" description="Pro residues" evidence="6">
    <location>
        <begin position="64"/>
        <end position="76"/>
    </location>
</feature>
<feature type="compositionally biased region" description="Low complexity" evidence="6">
    <location>
        <begin position="93"/>
        <end position="125"/>
    </location>
</feature>
<feature type="compositionally biased region" description="Low complexity" evidence="6">
    <location>
        <begin position="133"/>
        <end position="148"/>
    </location>
</feature>
<feature type="compositionally biased region" description="Low complexity" evidence="6">
    <location>
        <begin position="156"/>
        <end position="172"/>
    </location>
</feature>
<feature type="compositionally biased region" description="Polar residues" evidence="6">
    <location>
        <begin position="173"/>
        <end position="197"/>
    </location>
</feature>
<feature type="compositionally biased region" description="Low complexity" evidence="6">
    <location>
        <begin position="198"/>
        <end position="226"/>
    </location>
</feature>
<feature type="compositionally biased region" description="Polar residues" evidence="6">
    <location>
        <begin position="254"/>
        <end position="289"/>
    </location>
</feature>
<feature type="compositionally biased region" description="Low complexity" evidence="6">
    <location>
        <begin position="316"/>
        <end position="353"/>
    </location>
</feature>
<feature type="compositionally biased region" description="Low complexity" evidence="6">
    <location>
        <begin position="682"/>
        <end position="693"/>
    </location>
</feature>
<feature type="compositionally biased region" description="Low complexity" evidence="6">
    <location>
        <begin position="710"/>
        <end position="720"/>
    </location>
</feature>
<feature type="compositionally biased region" description="Acidic residues" evidence="6">
    <location>
        <begin position="767"/>
        <end position="789"/>
    </location>
</feature>
<feature type="compositionally biased region" description="Acidic residues" evidence="6">
    <location>
        <begin position="813"/>
        <end position="844"/>
    </location>
</feature>
<feature type="compositionally biased region" description="Basic residues" evidence="6">
    <location>
        <begin position="852"/>
        <end position="870"/>
    </location>
</feature>
<feature type="compositionally biased region" description="Polar residues" evidence="6">
    <location>
        <begin position="873"/>
        <end position="884"/>
    </location>
</feature>
<feature type="compositionally biased region" description="Polar residues" evidence="6">
    <location>
        <begin position="968"/>
        <end position="985"/>
    </location>
</feature>
<feature type="compositionally biased region" description="Low complexity" evidence="6">
    <location>
        <begin position="991"/>
        <end position="1044"/>
    </location>
</feature>
<feature type="compositionally biased region" description="Low complexity" evidence="6">
    <location>
        <begin position="1051"/>
        <end position="1066"/>
    </location>
</feature>
<feature type="compositionally biased region" description="Low complexity" evidence="6">
    <location>
        <begin position="1148"/>
        <end position="1176"/>
    </location>
</feature>
<feature type="active site" description="Proton acceptor" evidence="1 4 5">
    <location>
        <position position="514"/>
    </location>
</feature>
<feature type="binding site" evidence="1 4">
    <location>
        <begin position="400"/>
        <end position="408"/>
    </location>
    <ligand>
        <name>ATP</name>
        <dbReference type="ChEBI" id="CHEBI:30616"/>
    </ligand>
</feature>
<feature type="binding site" evidence="1 4">
    <location>
        <position position="423"/>
    </location>
    <ligand>
        <name>ATP</name>
        <dbReference type="ChEBI" id="CHEBI:30616"/>
    </ligand>
</feature>